<organism>
    <name type="scientific">Escherichia coli O9:H4 (strain HS)</name>
    <dbReference type="NCBI Taxonomy" id="331112"/>
    <lineage>
        <taxon>Bacteria</taxon>
        <taxon>Pseudomonadati</taxon>
        <taxon>Pseudomonadota</taxon>
        <taxon>Gammaproteobacteria</taxon>
        <taxon>Enterobacterales</taxon>
        <taxon>Enterobacteriaceae</taxon>
        <taxon>Escherichia</taxon>
    </lineage>
</organism>
<feature type="chain" id="PRO_1000068701" description="HTH-type transcriptional activator RhaS">
    <location>
        <begin position="1"/>
        <end position="278"/>
    </location>
</feature>
<feature type="domain" description="HTH araC/xylS-type" evidence="1">
    <location>
        <begin position="174"/>
        <end position="272"/>
    </location>
</feature>
<feature type="DNA-binding region" description="H-T-H motif" evidence="1">
    <location>
        <begin position="191"/>
        <end position="212"/>
    </location>
</feature>
<feature type="DNA-binding region" description="H-T-H motif" evidence="1">
    <location>
        <begin position="239"/>
        <end position="262"/>
    </location>
</feature>
<feature type="site" description="Interaction with sigma-70" evidence="1">
    <location>
        <position position="241"/>
    </location>
</feature>
<feature type="site" description="Interaction with sigma-70" evidence="1">
    <location>
        <position position="250"/>
    </location>
</feature>
<dbReference type="EMBL" id="CP000802">
    <property type="protein sequence ID" value="ABV08313.1"/>
    <property type="molecule type" value="Genomic_DNA"/>
</dbReference>
<dbReference type="RefSeq" id="WP_000217137.1">
    <property type="nucleotide sequence ID" value="NC_009800.1"/>
</dbReference>
<dbReference type="SMR" id="A8A709"/>
<dbReference type="GeneID" id="75204579"/>
<dbReference type="KEGG" id="ecx:EcHS_A4135"/>
<dbReference type="HOGENOM" id="CLU_000445_88_5_6"/>
<dbReference type="GO" id="GO:0005737">
    <property type="term" value="C:cytoplasm"/>
    <property type="evidence" value="ECO:0007669"/>
    <property type="project" value="UniProtKB-SubCell"/>
</dbReference>
<dbReference type="GO" id="GO:0003700">
    <property type="term" value="F:DNA-binding transcription factor activity"/>
    <property type="evidence" value="ECO:0007669"/>
    <property type="project" value="UniProtKB-UniRule"/>
</dbReference>
<dbReference type="GO" id="GO:0043565">
    <property type="term" value="F:sequence-specific DNA binding"/>
    <property type="evidence" value="ECO:0007669"/>
    <property type="project" value="InterPro"/>
</dbReference>
<dbReference type="GO" id="GO:0045893">
    <property type="term" value="P:positive regulation of DNA-templated transcription"/>
    <property type="evidence" value="ECO:0007669"/>
    <property type="project" value="UniProtKB-UniRule"/>
</dbReference>
<dbReference type="GO" id="GO:0019299">
    <property type="term" value="P:rhamnose metabolic process"/>
    <property type="evidence" value="ECO:0007669"/>
    <property type="project" value="UniProtKB-UniRule"/>
</dbReference>
<dbReference type="CDD" id="cd06977">
    <property type="entry name" value="cupin_RhaR_RhaS-like_N"/>
    <property type="match status" value="1"/>
</dbReference>
<dbReference type="FunFam" id="1.10.10.60:FF:000181">
    <property type="entry name" value="HTH-type transcriptional activator RhaS"/>
    <property type="match status" value="1"/>
</dbReference>
<dbReference type="FunFam" id="2.60.120.10:FF:000041">
    <property type="entry name" value="HTH-type transcriptional activator RhaS"/>
    <property type="match status" value="1"/>
</dbReference>
<dbReference type="Gene3D" id="1.10.10.60">
    <property type="entry name" value="Homeodomain-like"/>
    <property type="match status" value="1"/>
</dbReference>
<dbReference type="Gene3D" id="2.60.120.10">
    <property type="entry name" value="Jelly Rolls"/>
    <property type="match status" value="1"/>
</dbReference>
<dbReference type="HAMAP" id="MF_01534">
    <property type="entry name" value="HTH_type_RhaS"/>
    <property type="match status" value="1"/>
</dbReference>
<dbReference type="InterPro" id="IPR003313">
    <property type="entry name" value="AraC-bd"/>
</dbReference>
<dbReference type="InterPro" id="IPR050204">
    <property type="entry name" value="AraC_XylS_family_regulators"/>
</dbReference>
<dbReference type="InterPro" id="IPR009057">
    <property type="entry name" value="Homeodomain-like_sf"/>
</dbReference>
<dbReference type="InterPro" id="IPR037923">
    <property type="entry name" value="HTH-like"/>
</dbReference>
<dbReference type="InterPro" id="IPR018060">
    <property type="entry name" value="HTH_AraC"/>
</dbReference>
<dbReference type="InterPro" id="IPR018062">
    <property type="entry name" value="HTH_AraC-typ_CS"/>
</dbReference>
<dbReference type="InterPro" id="IPR047220">
    <property type="entry name" value="RhaR_RhaS-like_N"/>
</dbReference>
<dbReference type="InterPro" id="IPR014710">
    <property type="entry name" value="RmlC-like_jellyroll"/>
</dbReference>
<dbReference type="InterPro" id="IPR020449">
    <property type="entry name" value="Tscrpt_reg_AraC-type_HTH"/>
</dbReference>
<dbReference type="InterPro" id="IPR023609">
    <property type="entry name" value="Tscrpt_reg_HTH_RhaS"/>
</dbReference>
<dbReference type="NCBIfam" id="NF010028">
    <property type="entry name" value="PRK13503.1"/>
    <property type="match status" value="1"/>
</dbReference>
<dbReference type="PANTHER" id="PTHR46796:SF13">
    <property type="entry name" value="HTH-TYPE TRANSCRIPTIONAL ACTIVATOR RHAS"/>
    <property type="match status" value="1"/>
</dbReference>
<dbReference type="PANTHER" id="PTHR46796">
    <property type="entry name" value="HTH-TYPE TRANSCRIPTIONAL ACTIVATOR RHAS-RELATED"/>
    <property type="match status" value="1"/>
</dbReference>
<dbReference type="Pfam" id="PF02311">
    <property type="entry name" value="AraC_binding"/>
    <property type="match status" value="1"/>
</dbReference>
<dbReference type="Pfam" id="PF12833">
    <property type="entry name" value="HTH_18"/>
    <property type="match status" value="1"/>
</dbReference>
<dbReference type="PRINTS" id="PR00032">
    <property type="entry name" value="HTHARAC"/>
</dbReference>
<dbReference type="SMART" id="SM00342">
    <property type="entry name" value="HTH_ARAC"/>
    <property type="match status" value="1"/>
</dbReference>
<dbReference type="SUPFAM" id="SSF46689">
    <property type="entry name" value="Homeodomain-like"/>
    <property type="match status" value="2"/>
</dbReference>
<dbReference type="SUPFAM" id="SSF51215">
    <property type="entry name" value="Regulatory protein AraC"/>
    <property type="match status" value="1"/>
</dbReference>
<dbReference type="PROSITE" id="PS00041">
    <property type="entry name" value="HTH_ARAC_FAMILY_1"/>
    <property type="match status" value="1"/>
</dbReference>
<dbReference type="PROSITE" id="PS01124">
    <property type="entry name" value="HTH_ARAC_FAMILY_2"/>
    <property type="match status" value="1"/>
</dbReference>
<protein>
    <recommendedName>
        <fullName evidence="1">HTH-type transcriptional activator RhaS</fullName>
    </recommendedName>
    <alternativeName>
        <fullName evidence="1">L-rhamnose operon regulatory protein RhaS</fullName>
    </alternativeName>
</protein>
<name>RHAS_ECOHS</name>
<proteinExistence type="inferred from homology"/>
<gene>
    <name evidence="1" type="primary">rhaS</name>
    <name type="ordered locus">EcHS_A4135</name>
</gene>
<keyword id="KW-0010">Activator</keyword>
<keyword id="KW-0963">Cytoplasm</keyword>
<keyword id="KW-0238">DNA-binding</keyword>
<keyword id="KW-0677">Repeat</keyword>
<keyword id="KW-0684">Rhamnose metabolism</keyword>
<keyword id="KW-0804">Transcription</keyword>
<keyword id="KW-0805">Transcription regulation</keyword>
<reference key="1">
    <citation type="journal article" date="2008" name="J. Bacteriol.">
        <title>The pangenome structure of Escherichia coli: comparative genomic analysis of E. coli commensal and pathogenic isolates.</title>
        <authorList>
            <person name="Rasko D.A."/>
            <person name="Rosovitz M.J."/>
            <person name="Myers G.S.A."/>
            <person name="Mongodin E.F."/>
            <person name="Fricke W.F."/>
            <person name="Gajer P."/>
            <person name="Crabtree J."/>
            <person name="Sebaihia M."/>
            <person name="Thomson N.R."/>
            <person name="Chaudhuri R."/>
            <person name="Henderson I.R."/>
            <person name="Sperandio V."/>
            <person name="Ravel J."/>
        </authorList>
    </citation>
    <scope>NUCLEOTIDE SEQUENCE [LARGE SCALE GENOMIC DNA]</scope>
    <source>
        <strain>HS</strain>
    </source>
</reference>
<accession>A8A709</accession>
<evidence type="ECO:0000255" key="1">
    <source>
        <dbReference type="HAMAP-Rule" id="MF_01534"/>
    </source>
</evidence>
<sequence length="278" mass="32315">MTVLHSVDFFPSGNASVAIEPRLPQADFPEHHHDFHEIVIVEHGTGIHVFNGQPYTITGGTVCFVRDHDRHLYEHTDNLCLTNVLYRSPDRFQFLAGLNQLLPQELDGQYPSHWRVNHSVLQQVRQLVAQMEQQEGENDLPSTASREILFMQLLLLLRKSSLQENLENSASRLNLLLAWLEDHFADEVNWDAVADQFSLSLRTLHRQLKQQTGLTPQRYLNRLRLMKARHLLRHSEASVTDIAYRCGFSDSNHFSTLFRREFNWSPRDIRQGRDGFLQ</sequence>
<comment type="function">
    <text evidence="1">Activates expression of the rhaBAD and rhaT operons.</text>
</comment>
<comment type="subunit">
    <text evidence="1">Binds DNA as a dimer.</text>
</comment>
<comment type="subcellular location">
    <subcellularLocation>
        <location evidence="1">Cytoplasm</location>
    </subcellularLocation>
</comment>